<accession>Q5L722</accession>
<feature type="chain" id="PRO_0000082942" description="Methionyl-tRNA formyltransferase">
    <location>
        <begin position="1"/>
        <end position="321"/>
    </location>
</feature>
<feature type="binding site" evidence="1">
    <location>
        <begin position="111"/>
        <end position="114"/>
    </location>
    <ligand>
        <name>(6S)-5,6,7,8-tetrahydrofolate</name>
        <dbReference type="ChEBI" id="CHEBI:57453"/>
    </ligand>
</feature>
<name>FMT_CHLAB</name>
<comment type="function">
    <text evidence="1">Attaches a formyl group to the free amino group of methionyl-tRNA(fMet). The formyl group appears to play a dual role in the initiator identity of N-formylmethionyl-tRNA by promoting its recognition by IF2 and preventing the misappropriation of this tRNA by the elongation apparatus.</text>
</comment>
<comment type="catalytic activity">
    <reaction evidence="1">
        <text>L-methionyl-tRNA(fMet) + (6R)-10-formyltetrahydrofolate = N-formyl-L-methionyl-tRNA(fMet) + (6S)-5,6,7,8-tetrahydrofolate + H(+)</text>
        <dbReference type="Rhea" id="RHEA:24380"/>
        <dbReference type="Rhea" id="RHEA-COMP:9952"/>
        <dbReference type="Rhea" id="RHEA-COMP:9953"/>
        <dbReference type="ChEBI" id="CHEBI:15378"/>
        <dbReference type="ChEBI" id="CHEBI:57453"/>
        <dbReference type="ChEBI" id="CHEBI:78530"/>
        <dbReference type="ChEBI" id="CHEBI:78844"/>
        <dbReference type="ChEBI" id="CHEBI:195366"/>
        <dbReference type="EC" id="2.1.2.9"/>
    </reaction>
</comment>
<comment type="similarity">
    <text evidence="1">Belongs to the Fmt family.</text>
</comment>
<protein>
    <recommendedName>
        <fullName evidence="1">Methionyl-tRNA formyltransferase</fullName>
        <ecNumber evidence="1">2.1.2.9</ecNumber>
    </recommendedName>
</protein>
<proteinExistence type="inferred from homology"/>
<reference key="1">
    <citation type="journal article" date="2005" name="Genome Res.">
        <title>The Chlamydophila abortus genome sequence reveals an array of variable proteins that contribute to interspecies variation.</title>
        <authorList>
            <person name="Thomson N.R."/>
            <person name="Yeats C."/>
            <person name="Bell K."/>
            <person name="Holden M.T.G."/>
            <person name="Bentley S.D."/>
            <person name="Livingstone M."/>
            <person name="Cerdeno-Tarraga A.-M."/>
            <person name="Harris B."/>
            <person name="Doggett J."/>
            <person name="Ormond D."/>
            <person name="Mungall K."/>
            <person name="Clarke K."/>
            <person name="Feltwell T."/>
            <person name="Hance Z."/>
            <person name="Sanders M."/>
            <person name="Quail M.A."/>
            <person name="Price C."/>
            <person name="Barrell B.G."/>
            <person name="Parkhill J."/>
            <person name="Longbottom D."/>
        </authorList>
    </citation>
    <scope>NUCLEOTIDE SEQUENCE [LARGE SCALE GENOMIC DNA]</scope>
    <source>
        <strain>DSM 27085 / S26/3</strain>
    </source>
</reference>
<gene>
    <name evidence="1" type="primary">fmt</name>
    <name type="ordered locus">CAB091</name>
</gene>
<sequence>MSLKIVYFGTPQFAATVLADLLHHEVNVVAVVTRVDKPQKRSSQLIPSPVKTLALSKNIPLLQPEKVSDPQFVEQLRDFEADVFIVVAYGAILKQMVLDIPKYGCYNLHAGLLPAYRGAAPIQRCIMDGVVQSGNTVIRMDAGMDTGDIANVSFVPVGPDMTAGELAEALASQGGEILIKTLQQISDGTITHTPQEASKASIAPKLSKEEGFILWDHPAEKVYAQIRGVTPAPGAWTLYSYQGKPARRLVIRKASLSSSQGVYGHPGDILLSDQQELLVACAEGAICLKEIQPEGKGVMDSKSFLNGHSGHKLKLSLNLMS</sequence>
<dbReference type="EC" id="2.1.2.9" evidence="1"/>
<dbReference type="EMBL" id="CR848038">
    <property type="protein sequence ID" value="CAH63548.1"/>
    <property type="molecule type" value="Genomic_DNA"/>
</dbReference>
<dbReference type="RefSeq" id="WP_011096824.1">
    <property type="nucleotide sequence ID" value="NC_004552.2"/>
</dbReference>
<dbReference type="SMR" id="Q5L722"/>
<dbReference type="KEGG" id="cab:CAB091"/>
<dbReference type="eggNOG" id="COG0223">
    <property type="taxonomic scope" value="Bacteria"/>
</dbReference>
<dbReference type="HOGENOM" id="CLU_033347_1_1_0"/>
<dbReference type="OrthoDB" id="9802815at2"/>
<dbReference type="Proteomes" id="UP000001012">
    <property type="component" value="Chromosome"/>
</dbReference>
<dbReference type="GO" id="GO:0005829">
    <property type="term" value="C:cytosol"/>
    <property type="evidence" value="ECO:0007669"/>
    <property type="project" value="TreeGrafter"/>
</dbReference>
<dbReference type="GO" id="GO:0004479">
    <property type="term" value="F:methionyl-tRNA formyltransferase activity"/>
    <property type="evidence" value="ECO:0007669"/>
    <property type="project" value="UniProtKB-UniRule"/>
</dbReference>
<dbReference type="CDD" id="cd08646">
    <property type="entry name" value="FMT_core_Met-tRNA-FMT_N"/>
    <property type="match status" value="1"/>
</dbReference>
<dbReference type="CDD" id="cd08704">
    <property type="entry name" value="Met_tRNA_FMT_C"/>
    <property type="match status" value="1"/>
</dbReference>
<dbReference type="Gene3D" id="3.40.50.12230">
    <property type="match status" value="1"/>
</dbReference>
<dbReference type="HAMAP" id="MF_00182">
    <property type="entry name" value="Formyl_trans"/>
    <property type="match status" value="1"/>
</dbReference>
<dbReference type="InterPro" id="IPR005794">
    <property type="entry name" value="Fmt"/>
</dbReference>
<dbReference type="InterPro" id="IPR005793">
    <property type="entry name" value="Formyl_trans_C"/>
</dbReference>
<dbReference type="InterPro" id="IPR002376">
    <property type="entry name" value="Formyl_transf_N"/>
</dbReference>
<dbReference type="InterPro" id="IPR036477">
    <property type="entry name" value="Formyl_transf_N_sf"/>
</dbReference>
<dbReference type="InterPro" id="IPR011034">
    <property type="entry name" value="Formyl_transferase-like_C_sf"/>
</dbReference>
<dbReference type="InterPro" id="IPR001555">
    <property type="entry name" value="GART_AS"/>
</dbReference>
<dbReference type="InterPro" id="IPR044135">
    <property type="entry name" value="Met-tRNA-FMT_C"/>
</dbReference>
<dbReference type="InterPro" id="IPR041711">
    <property type="entry name" value="Met-tRNA-FMT_N"/>
</dbReference>
<dbReference type="NCBIfam" id="TIGR00460">
    <property type="entry name" value="fmt"/>
    <property type="match status" value="1"/>
</dbReference>
<dbReference type="PANTHER" id="PTHR11138">
    <property type="entry name" value="METHIONYL-TRNA FORMYLTRANSFERASE"/>
    <property type="match status" value="1"/>
</dbReference>
<dbReference type="PANTHER" id="PTHR11138:SF5">
    <property type="entry name" value="METHIONYL-TRNA FORMYLTRANSFERASE, MITOCHONDRIAL"/>
    <property type="match status" value="1"/>
</dbReference>
<dbReference type="Pfam" id="PF02911">
    <property type="entry name" value="Formyl_trans_C"/>
    <property type="match status" value="1"/>
</dbReference>
<dbReference type="Pfam" id="PF00551">
    <property type="entry name" value="Formyl_trans_N"/>
    <property type="match status" value="1"/>
</dbReference>
<dbReference type="SUPFAM" id="SSF50486">
    <property type="entry name" value="FMT C-terminal domain-like"/>
    <property type="match status" value="1"/>
</dbReference>
<dbReference type="SUPFAM" id="SSF53328">
    <property type="entry name" value="Formyltransferase"/>
    <property type="match status" value="1"/>
</dbReference>
<dbReference type="PROSITE" id="PS00373">
    <property type="entry name" value="GART"/>
    <property type="match status" value="1"/>
</dbReference>
<evidence type="ECO:0000255" key="1">
    <source>
        <dbReference type="HAMAP-Rule" id="MF_00182"/>
    </source>
</evidence>
<organism>
    <name type="scientific">Chlamydia abortus (strain DSM 27085 / S26/3)</name>
    <name type="common">Chlamydophila abortus</name>
    <dbReference type="NCBI Taxonomy" id="218497"/>
    <lineage>
        <taxon>Bacteria</taxon>
        <taxon>Pseudomonadati</taxon>
        <taxon>Chlamydiota</taxon>
        <taxon>Chlamydiia</taxon>
        <taxon>Chlamydiales</taxon>
        <taxon>Chlamydiaceae</taxon>
        <taxon>Chlamydia/Chlamydophila group</taxon>
        <taxon>Chlamydia</taxon>
    </lineage>
</organism>
<keyword id="KW-0648">Protein biosynthesis</keyword>
<keyword id="KW-0808">Transferase</keyword>